<comment type="function">
    <text evidence="1">Positively regulates the expression of PE13 and PPE18.</text>
</comment>
<comment type="similarity">
    <text evidence="3">Belongs to the ROK (NagC/XylR) family.</text>
</comment>
<evidence type="ECO:0000250" key="1">
    <source>
        <dbReference type="UniProtKB" id="P9WKV1"/>
    </source>
</evidence>
<evidence type="ECO:0000256" key="2">
    <source>
        <dbReference type="SAM" id="MobiDB-lite"/>
    </source>
</evidence>
<evidence type="ECO:0000305" key="3"/>
<protein>
    <recommendedName>
        <fullName evidence="1">Transcriptional regulator MT0503</fullName>
    </recommendedName>
</protein>
<keyword id="KW-0010">Activator</keyword>
<keyword id="KW-0238">DNA-binding</keyword>
<keyword id="KW-1185">Reference proteome</keyword>
<keyword id="KW-0804">Transcription</keyword>
<keyword id="KW-0805">Transcription regulation</keyword>
<proteinExistence type="inferred from homology"/>
<dbReference type="EMBL" id="AE000516">
    <property type="protein sequence ID" value="AAK44726.1"/>
    <property type="molecule type" value="Genomic_DNA"/>
</dbReference>
<dbReference type="PIR" id="H70743">
    <property type="entry name" value="H70743"/>
</dbReference>
<dbReference type="RefSeq" id="WP_003402361.1">
    <property type="nucleotide sequence ID" value="NZ_KK341227.1"/>
</dbReference>
<dbReference type="SMR" id="P9WKV0"/>
<dbReference type="KEGG" id="mtc:MT0503"/>
<dbReference type="PATRIC" id="fig|83331.31.peg.533"/>
<dbReference type="HOGENOM" id="CLU_036604_13_4_11"/>
<dbReference type="Proteomes" id="UP000001020">
    <property type="component" value="Chromosome"/>
</dbReference>
<dbReference type="GO" id="GO:0003677">
    <property type="term" value="F:DNA binding"/>
    <property type="evidence" value="ECO:0007669"/>
    <property type="project" value="UniProtKB-KW"/>
</dbReference>
<dbReference type="FunFam" id="3.30.420.40:FF:000330">
    <property type="entry name" value="Transcriptional regulator MT0503"/>
    <property type="match status" value="1"/>
</dbReference>
<dbReference type="Gene3D" id="3.30.420.40">
    <property type="match status" value="2"/>
</dbReference>
<dbReference type="Gene3D" id="1.10.10.10">
    <property type="entry name" value="Winged helix-like DNA-binding domain superfamily/Winged helix DNA-binding domain"/>
    <property type="match status" value="1"/>
</dbReference>
<dbReference type="InterPro" id="IPR043129">
    <property type="entry name" value="ATPase_NBD"/>
</dbReference>
<dbReference type="InterPro" id="IPR000600">
    <property type="entry name" value="ROK"/>
</dbReference>
<dbReference type="InterPro" id="IPR036388">
    <property type="entry name" value="WH-like_DNA-bd_sf"/>
</dbReference>
<dbReference type="InterPro" id="IPR036390">
    <property type="entry name" value="WH_DNA-bd_sf"/>
</dbReference>
<dbReference type="PANTHER" id="PTHR18964:SF149">
    <property type="entry name" value="BIFUNCTIONAL UDP-N-ACETYLGLUCOSAMINE 2-EPIMERASE_N-ACETYLMANNOSAMINE KINASE"/>
    <property type="match status" value="1"/>
</dbReference>
<dbReference type="PANTHER" id="PTHR18964">
    <property type="entry name" value="ROK (REPRESSOR, ORF, KINASE) FAMILY"/>
    <property type="match status" value="1"/>
</dbReference>
<dbReference type="Pfam" id="PF00480">
    <property type="entry name" value="ROK"/>
    <property type="match status" value="1"/>
</dbReference>
<dbReference type="SUPFAM" id="SSF53067">
    <property type="entry name" value="Actin-like ATPase domain"/>
    <property type="match status" value="1"/>
</dbReference>
<dbReference type="SUPFAM" id="SSF46785">
    <property type="entry name" value="Winged helix' DNA-binding domain"/>
    <property type="match status" value="1"/>
</dbReference>
<sequence>MYSTNRTSQSLSRKPGRKHQLRSHRYVMPPSLHLSDSAAASVFRAVRLRGPVGRDVIAGSTSLSIATVNRQVIALLEAGLLRERADLAVSGAIGRPRVPVEVNHEPFVTLGIHIGARTTSIVATDLFGRTLDTVETPTPRNAAGAALTSLADSADRYLQRWRRRRALWVGVTLGGAVDSATGHVDHPRLGWRQAPVGPVLADALGLPVSVASHVDAMAGAELMLGMRRFAPSSSTSLYVYARETVGYALMIGGRVHCPASGPGTIAPLPVHSEMLGGTGQLESTVSDEAVLAAARRLRIIPGIASRTRTGGSATAITDLLRVARAGNQQAKELLAERARVLGGAVALLRDLLNPDEVVVGGQAFTEYPEAMEQVEAAFTAGSVLAPRDIRVTVFGNRVQEAGAGIVSLSGLYADPLGALRRSGALDARLQDTAPEALA</sequence>
<gene>
    <name type="ordered locus">MT0503</name>
</gene>
<name>Y485_MYCTO</name>
<feature type="chain" id="PRO_0000427590" description="Transcriptional regulator MT0503">
    <location>
        <begin position="1"/>
        <end position="438"/>
    </location>
</feature>
<feature type="DNA-binding region" description="H-T-H motif" evidence="1">
    <location>
        <begin position="52"/>
        <end position="73"/>
    </location>
</feature>
<feature type="region of interest" description="Disordered" evidence="2">
    <location>
        <begin position="1"/>
        <end position="22"/>
    </location>
</feature>
<feature type="compositionally biased region" description="Polar residues" evidence="2">
    <location>
        <begin position="1"/>
        <end position="12"/>
    </location>
</feature>
<reference key="1">
    <citation type="journal article" date="2002" name="J. Bacteriol.">
        <title>Whole-genome comparison of Mycobacterium tuberculosis clinical and laboratory strains.</title>
        <authorList>
            <person name="Fleischmann R.D."/>
            <person name="Alland D."/>
            <person name="Eisen J.A."/>
            <person name="Carpenter L."/>
            <person name="White O."/>
            <person name="Peterson J.D."/>
            <person name="DeBoy R.T."/>
            <person name="Dodson R.J."/>
            <person name="Gwinn M.L."/>
            <person name="Haft D.H."/>
            <person name="Hickey E.K."/>
            <person name="Kolonay J.F."/>
            <person name="Nelson W.C."/>
            <person name="Umayam L.A."/>
            <person name="Ermolaeva M.D."/>
            <person name="Salzberg S.L."/>
            <person name="Delcher A."/>
            <person name="Utterback T.R."/>
            <person name="Weidman J.F."/>
            <person name="Khouri H.M."/>
            <person name="Gill J."/>
            <person name="Mikula A."/>
            <person name="Bishai W."/>
            <person name="Jacobs W.R. Jr."/>
            <person name="Venter J.C."/>
            <person name="Fraser C.M."/>
        </authorList>
    </citation>
    <scope>NUCLEOTIDE SEQUENCE [LARGE SCALE GENOMIC DNA]</scope>
    <source>
        <strain>CDC 1551 / Oshkosh</strain>
    </source>
</reference>
<organism>
    <name type="scientific">Mycobacterium tuberculosis (strain CDC 1551 / Oshkosh)</name>
    <dbReference type="NCBI Taxonomy" id="83331"/>
    <lineage>
        <taxon>Bacteria</taxon>
        <taxon>Bacillati</taxon>
        <taxon>Actinomycetota</taxon>
        <taxon>Actinomycetes</taxon>
        <taxon>Mycobacteriales</taxon>
        <taxon>Mycobacteriaceae</taxon>
        <taxon>Mycobacterium</taxon>
        <taxon>Mycobacterium tuberculosis complex</taxon>
    </lineage>
</organism>
<accession>P9WKV0</accession>
<accession>L0T5I1</accession>
<accession>P64705</accession>
<accession>Q11151</accession>